<keyword id="KW-0656">Proto-oncogene</keyword>
<keyword id="KW-1185">Reference proteome</keyword>
<evidence type="ECO:0000256" key="1">
    <source>
        <dbReference type="SAM" id="MobiDB-lite"/>
    </source>
</evidence>
<evidence type="ECO:0000269" key="2">
    <source>
    </source>
</evidence>
<evidence type="ECO:0000269" key="3">
    <source>
    </source>
</evidence>
<evidence type="ECO:0000305" key="4"/>
<dbReference type="EMBL" id="AJ223366">
    <property type="protein sequence ID" value="CAB65727.1"/>
    <property type="molecule type" value="mRNA"/>
</dbReference>
<dbReference type="EMBL" id="AJ223366">
    <property type="protein sequence ID" value="CAB65726.1"/>
    <property type="status" value="ALT_INIT"/>
    <property type="molecule type" value="mRNA"/>
</dbReference>
<dbReference type="EMBL" id="AP005379">
    <property type="status" value="NOT_ANNOTATED_CDS"/>
    <property type="molecule type" value="Genomic_DNA"/>
</dbReference>
<dbReference type="EMBL" id="BC011815">
    <property type="protein sequence ID" value="AAH11815.1"/>
    <property type="molecule type" value="mRNA"/>
</dbReference>
<dbReference type="CCDS" id="CCDS8190.1"/>
<dbReference type="RefSeq" id="NP_001280220.1">
    <property type="nucleotide sequence ID" value="NM_001293291.2"/>
</dbReference>
<dbReference type="RefSeq" id="NP_001280223.1">
    <property type="nucleotide sequence ID" value="NM_001293294.1"/>
</dbReference>
<dbReference type="RefSeq" id="NP_001280225.1">
    <property type="nucleotide sequence ID" value="NM_001293296.1"/>
</dbReference>
<dbReference type="RefSeq" id="NP_001287852.1">
    <property type="nucleotide sequence ID" value="NM_001300923.1"/>
</dbReference>
<dbReference type="RefSeq" id="NP_001287853.1">
    <property type="nucleotide sequence ID" value="NM_001300924.1"/>
</dbReference>
<dbReference type="RefSeq" id="NP_620123.2">
    <property type="nucleotide sequence ID" value="NM_138768.3"/>
</dbReference>
<dbReference type="RefSeq" id="XP_047282719.1">
    <property type="nucleotide sequence ID" value="XM_047426763.1"/>
</dbReference>
<dbReference type="RefSeq" id="XP_054224386.1">
    <property type="nucleotide sequence ID" value="XM_054368411.1"/>
</dbReference>
<dbReference type="BioGRID" id="117748">
    <property type="interactions" value="17"/>
</dbReference>
<dbReference type="FunCoup" id="Q96EZ4">
    <property type="interactions" value="3"/>
</dbReference>
<dbReference type="IntAct" id="Q96EZ4">
    <property type="interactions" value="15"/>
</dbReference>
<dbReference type="MINT" id="Q96EZ4"/>
<dbReference type="STRING" id="9606.ENSP00000412482"/>
<dbReference type="GlyGen" id="Q96EZ4">
    <property type="glycosylation" value="1 site, 1 O-linked glycan (1 site)"/>
</dbReference>
<dbReference type="iPTMnet" id="Q96EZ4"/>
<dbReference type="PhosphoSitePlus" id="Q96EZ4"/>
<dbReference type="BioMuta" id="MYEOV"/>
<dbReference type="DMDM" id="296439231"/>
<dbReference type="MassIVE" id="Q96EZ4"/>
<dbReference type="PaxDb" id="9606-ENSP00000308330"/>
<dbReference type="PeptideAtlas" id="Q96EZ4"/>
<dbReference type="Antibodypedia" id="2162">
    <property type="antibodies" value="83 antibodies from 22 providers"/>
</dbReference>
<dbReference type="DNASU" id="26579"/>
<dbReference type="Ensembl" id="ENST00000308946.3">
    <property type="protein sequence ID" value="ENSP00000308330.3"/>
    <property type="gene ID" value="ENSG00000172927.9"/>
</dbReference>
<dbReference type="Ensembl" id="ENST00000441339.3">
    <property type="protein sequence ID" value="ENSP00000412482.2"/>
    <property type="gene ID" value="ENSG00000172927.9"/>
</dbReference>
<dbReference type="GeneID" id="26579"/>
<dbReference type="KEGG" id="hsa:26579"/>
<dbReference type="MANE-Select" id="ENST00000441339.3">
    <property type="protein sequence ID" value="ENSP00000412482.2"/>
    <property type="RefSeq nucleotide sequence ID" value="NM_001293291.2"/>
    <property type="RefSeq protein sequence ID" value="NP_001280220.1"/>
</dbReference>
<dbReference type="UCSC" id="uc001oov.3">
    <property type="organism name" value="human"/>
</dbReference>
<dbReference type="AGR" id="HGNC:7563"/>
<dbReference type="CTD" id="26579"/>
<dbReference type="DisGeNET" id="26579"/>
<dbReference type="GeneCards" id="MYEOV"/>
<dbReference type="HGNC" id="HGNC:7563">
    <property type="gene designation" value="MYEOV"/>
</dbReference>
<dbReference type="HPA" id="ENSG00000172927">
    <property type="expression patterns" value="Tissue enhanced (adipose tissue, breast, esophagus, stomach)"/>
</dbReference>
<dbReference type="MIM" id="605625">
    <property type="type" value="gene"/>
</dbReference>
<dbReference type="neXtProt" id="NX_Q96EZ4"/>
<dbReference type="OpenTargets" id="ENSG00000172927"/>
<dbReference type="PharmGKB" id="PA31362"/>
<dbReference type="VEuPathDB" id="HostDB:ENSG00000172927"/>
<dbReference type="eggNOG" id="ENOG502TE93">
    <property type="taxonomic scope" value="Eukaryota"/>
</dbReference>
<dbReference type="GeneTree" id="ENSGT00400000022774"/>
<dbReference type="InParanoid" id="Q96EZ4"/>
<dbReference type="OMA" id="SLMFIRQ"/>
<dbReference type="OrthoDB" id="9537745at2759"/>
<dbReference type="PAN-GO" id="Q96EZ4">
    <property type="GO annotations" value="0 GO annotations based on evolutionary models"/>
</dbReference>
<dbReference type="PhylomeDB" id="Q96EZ4"/>
<dbReference type="TreeFam" id="TF353299"/>
<dbReference type="PathwayCommons" id="Q96EZ4"/>
<dbReference type="SignaLink" id="Q96EZ4"/>
<dbReference type="BioGRID-ORCS" id="26579">
    <property type="hits" value="19 hits in 1148 CRISPR screens"/>
</dbReference>
<dbReference type="ChiTaRS" id="MYEOV">
    <property type="organism name" value="human"/>
</dbReference>
<dbReference type="GenomeRNAi" id="26579"/>
<dbReference type="Pharos" id="Q96EZ4">
    <property type="development level" value="Tbio"/>
</dbReference>
<dbReference type="PRO" id="PR:Q96EZ4"/>
<dbReference type="Proteomes" id="UP000005640">
    <property type="component" value="Chromosome 11"/>
</dbReference>
<dbReference type="RNAct" id="Q96EZ4">
    <property type="molecule type" value="protein"/>
</dbReference>
<dbReference type="Bgee" id="ENSG00000172927">
    <property type="expression patterns" value="Expressed in lower esophagus mucosa and 114 other cell types or tissues"/>
</dbReference>
<dbReference type="ExpressionAtlas" id="Q96EZ4">
    <property type="expression patterns" value="baseline and differential"/>
</dbReference>
<sequence length="313" mass="33556">MALRICVTYTPALPIGLCTRCCLCLEQSPSWCHCLRGVSFLTFHLHQSVPLGDRDSLLMFTRQAGHFVEGSKAGRSRGRLCLSQALRVAVRGAFVSLWFAAGAGDRERNKGDKGAQTGAGLSQEAEDVDVSRARRVTDAPQGTLCGTGNRNSGSQSARVVGVAHLGEAFRVGVEQAISSCPEEVHGRHGLSMEIMWARMDVALRSPGRGLLAGAGALCMTLAESSCPDYERGRRACLTLHRHPTPHCSTWGLPLRVAGSWLTVVTVEALGGWRMGVRRTGQVGPTMHPPPVSGASPLLLHHLLLLLLIIILTC</sequence>
<name>MYEOV_HUMAN</name>
<gene>
    <name type="primary">MYEOV</name>
    <name type="synonym">OCIM</name>
</gene>
<accession>Q96EZ4</accession>
<accession>Q9UGN6</accession>
<accession>Q9UGN7</accession>
<feature type="chain" id="PRO_0000096668" description="Myeloma-overexpressed gene protein">
    <location>
        <begin position="1"/>
        <end position="313"/>
    </location>
</feature>
<feature type="region of interest" description="Disordered" evidence="1">
    <location>
        <begin position="107"/>
        <end position="129"/>
    </location>
</feature>
<feature type="sequence variant" id="VAR_016603" description="In dbSNP:rs7103126." evidence="2 3">
    <original>V</original>
    <variation>A</variation>
    <location>
        <position position="159"/>
    </location>
</feature>
<feature type="sequence variant" id="VAR_056948" description="In dbSNP:rs11539762." evidence="2">
    <original>R</original>
    <variation>Q</variation>
    <location>
        <position position="198"/>
    </location>
</feature>
<feature type="sequence variant" id="VAR_056949" description="In dbSNP:rs11228610." evidence="2">
    <original>G</original>
    <variation>R</variation>
    <location>
        <position position="271"/>
    </location>
</feature>
<feature type="sequence variant" id="VAR_056950" description="In dbSNP:rs12274095.">
    <original>P</original>
    <variation>T</variation>
    <location>
        <position position="284"/>
    </location>
</feature>
<feature type="sequence conflict" description="In Ref. 3; AAH11815." evidence="4" ref="3">
    <original>M</original>
    <variation>V</variation>
    <location>
        <position position="219"/>
    </location>
</feature>
<reference key="1">
    <citation type="journal article" date="2000" name="Blood">
        <title>Concurrent activation of a novel putative transforming gene, myeov, and cyclin D1 in a subset of multiple myeloma cell lines with t(11;14)(q13;q32).</title>
        <authorList>
            <person name="Janssen J.W.G."/>
            <person name="Vaandrager J.W."/>
            <person name="Heuser T."/>
            <person name="Jauch A."/>
            <person name="Kluin P.M."/>
            <person name="Geelen E."/>
            <person name="Bergsagel P.L."/>
            <person name="Kuehl W.M."/>
            <person name="Drexler H.G."/>
            <person name="Otsuki T."/>
            <person name="Bartram C.R."/>
            <person name="Schuuring E."/>
        </authorList>
    </citation>
    <scope>NUCLEOTIDE SEQUENCE [MRNA]</scope>
    <scope>VARIANTS ALA-159; GLN-198 AND ARG-271</scope>
    <source>
        <tissue>Stomach cancer</tissue>
    </source>
</reference>
<reference key="2">
    <citation type="journal article" date="2006" name="Nature">
        <title>Human chromosome 11 DNA sequence and analysis including novel gene identification.</title>
        <authorList>
            <person name="Taylor T.D."/>
            <person name="Noguchi H."/>
            <person name="Totoki Y."/>
            <person name="Toyoda A."/>
            <person name="Kuroki Y."/>
            <person name="Dewar K."/>
            <person name="Lloyd C."/>
            <person name="Itoh T."/>
            <person name="Takeda T."/>
            <person name="Kim D.-W."/>
            <person name="She X."/>
            <person name="Barlow K.F."/>
            <person name="Bloom T."/>
            <person name="Bruford E."/>
            <person name="Chang J.L."/>
            <person name="Cuomo C.A."/>
            <person name="Eichler E."/>
            <person name="FitzGerald M.G."/>
            <person name="Jaffe D.B."/>
            <person name="LaButti K."/>
            <person name="Nicol R."/>
            <person name="Park H.-S."/>
            <person name="Seaman C."/>
            <person name="Sougnez C."/>
            <person name="Yang X."/>
            <person name="Zimmer A.R."/>
            <person name="Zody M.C."/>
            <person name="Birren B.W."/>
            <person name="Nusbaum C."/>
            <person name="Fujiyama A."/>
            <person name="Hattori M."/>
            <person name="Rogers J."/>
            <person name="Lander E.S."/>
            <person name="Sakaki Y."/>
        </authorList>
    </citation>
    <scope>NUCLEOTIDE SEQUENCE [LARGE SCALE GENOMIC DNA]</scope>
</reference>
<reference key="3">
    <citation type="journal article" date="2004" name="Genome Res.">
        <title>The status, quality, and expansion of the NIH full-length cDNA project: the Mammalian Gene Collection (MGC).</title>
        <authorList>
            <consortium name="The MGC Project Team"/>
        </authorList>
    </citation>
    <scope>NUCLEOTIDE SEQUENCE [LARGE SCALE MRNA]</scope>
    <scope>VARIANT ALA-159</scope>
    <source>
        <tissue>Brain</tissue>
    </source>
</reference>
<organism>
    <name type="scientific">Homo sapiens</name>
    <name type="common">Human</name>
    <dbReference type="NCBI Taxonomy" id="9606"/>
    <lineage>
        <taxon>Eukaryota</taxon>
        <taxon>Metazoa</taxon>
        <taxon>Chordata</taxon>
        <taxon>Craniata</taxon>
        <taxon>Vertebrata</taxon>
        <taxon>Euteleostomi</taxon>
        <taxon>Mammalia</taxon>
        <taxon>Eutheria</taxon>
        <taxon>Euarchontoglires</taxon>
        <taxon>Primates</taxon>
        <taxon>Haplorrhini</taxon>
        <taxon>Catarrhini</taxon>
        <taxon>Hominidae</taxon>
        <taxon>Homo</taxon>
    </lineage>
</organism>
<protein>
    <recommendedName>
        <fullName>Myeloma-overexpressed gene protein</fullName>
    </recommendedName>
    <alternativeName>
        <fullName>Oncogene in multiple myeloma</fullName>
    </alternativeName>
</protein>
<comment type="interaction">
    <interactant intactId="EBI-12260130">
        <id>Q96EZ4</id>
    </interactant>
    <interactant intactId="EBI-2873130">
        <id>P51911</id>
        <label>CNN1</label>
    </interactant>
    <organismsDiffer>false</organismsDiffer>
    <experiments>2</experiments>
</comment>
<comment type="interaction">
    <interactant intactId="EBI-12260130">
        <id>Q96EZ4</id>
    </interactant>
    <interactant intactId="EBI-724310">
        <id>Q15038</id>
        <label>DAZAP2</label>
    </interactant>
    <organismsDiffer>false</organismsDiffer>
    <experiments>3</experiments>
</comment>
<comment type="interaction">
    <interactant intactId="EBI-12260130">
        <id>Q96EZ4</id>
    </interactant>
    <interactant intactId="EBI-748974">
        <id>Q96CV9</id>
        <label>OPTN</label>
    </interactant>
    <organismsDiffer>false</organismsDiffer>
    <experiments>3</experiments>
</comment>
<comment type="interaction">
    <interactant intactId="EBI-12260130">
        <id>Q96EZ4</id>
    </interactant>
    <interactant intactId="EBI-358993">
        <id>Q15645</id>
        <label>TRIP13</label>
    </interactant>
    <organismsDiffer>false</organismsDiffer>
    <experiments>3</experiments>
</comment>
<comment type="developmental stage">
    <text>Overexpressed in tumor cells lines with a t(11;14)(q13;q32) translocation.</text>
</comment>
<comment type="sequence caution" evidence="4">
    <conflict type="erroneous initiation">
        <sequence resource="EMBL-CDS" id="CAB65726"/>
    </conflict>
    <text>Truncated N-terminus.</text>
</comment>
<comment type="online information" name="Atlas of Genetics and Cytogenetics in Oncology and Haematology">
    <link uri="https://atlasgeneticsoncology.org/gene/395/MYEOV"/>
</comment>
<proteinExistence type="evidence at protein level"/>